<proteinExistence type="evidence at protein level"/>
<feature type="chain" id="PRO_0000291310" description="Amphinase-4">
    <location>
        <begin position="1"/>
        <end position="114"/>
    </location>
</feature>
<feature type="active site" description="Proton acceptor" evidence="1">
    <location>
        <position position="15"/>
    </location>
</feature>
<feature type="active site" description="Proton donor" evidence="1">
    <location>
        <position position="107"/>
    </location>
</feature>
<feature type="binding site" evidence="1">
    <location>
        <begin position="42"/>
        <end position="46"/>
    </location>
    <ligand>
        <name>substrate</name>
    </ligand>
</feature>
<feature type="glycosylation site" description="N-linked (GlcNAc...) asparagine" evidence="2">
    <location>
        <position position="27"/>
    </location>
</feature>
<feature type="glycosylation site" description="N-linked (GlcNAc...) asparagine" evidence="2">
    <location>
        <position position="67"/>
    </location>
</feature>
<feature type="glycosylation site" description="N-linked (GlcNAc...) asparagine" evidence="2">
    <location>
        <position position="91"/>
    </location>
</feature>
<feature type="disulfide bond" evidence="1">
    <location>
        <begin position="26"/>
        <end position="79"/>
    </location>
</feature>
<feature type="disulfide bond" evidence="1">
    <location>
        <begin position="41"/>
        <end position="85"/>
    </location>
</feature>
<feature type="disulfide bond" evidence="1">
    <location>
        <begin position="59"/>
        <end position="100"/>
    </location>
</feature>
<feature type="disulfide bond" evidence="1">
    <location>
        <begin position="97"/>
        <end position="114"/>
    </location>
</feature>
<accession>P85075</accession>
<keyword id="KW-0903">Direct protein sequencing</keyword>
<keyword id="KW-1015">Disulfide bond</keyword>
<keyword id="KW-0255">Endonuclease</keyword>
<keyword id="KW-0325">Glycoprotein</keyword>
<keyword id="KW-0378">Hydrolase</keyword>
<keyword id="KW-0540">Nuclease</keyword>
<keyword id="KW-0964">Secreted</keyword>
<comment type="function">
    <text evidence="3">Endonuclease, hydrolyzes highly polymerized RNA, poly(U) and poly(C), and the dinucleotides CpA and UpA. Hydrolyzes rCA, rUA and rUG. Has cytotoxic activity against cultured human submaxillary gland carcinoma cells.</text>
</comment>
<comment type="subunit">
    <text evidence="3">Monomer.</text>
</comment>
<comment type="subcellular location">
    <subcellularLocation>
        <location evidence="4">Secreted</location>
    </subcellularLocation>
</comment>
<comment type="PTM">
    <text evidence="3">There are at least five different forms arising from glycan heterogeneity.</text>
</comment>
<comment type="mass spectrometry" mass="13903.0" error="1.0" method="Electrospray" evidence="3">
    <text>Major (most represented) glycoform 1.</text>
</comment>
<comment type="mass spectrometry" mass="14268.0" error="1.0" method="Electrospray" evidence="3">
    <text>Major (second-most represented) glycoform 2.</text>
</comment>
<comment type="mass spectrometry" mass="13700.0" error="1.0" method="Electrospray" evidence="3">
    <text>Minor glycoform 3.</text>
</comment>
<comment type="mass spectrometry" mass="14430.0" error="1.0" method="Electrospray" evidence="3">
    <text>Minor glycoform 4.</text>
</comment>
<comment type="mass spectrometry" mass="14065.0" error="1.0" method="Electrospray" evidence="3">
    <text>Minor glycoform 5.</text>
</comment>
<comment type="similarity">
    <text evidence="2">Belongs to the pancreatic ribonuclease family.</text>
</comment>
<dbReference type="EC" id="3.1.27.-"/>
<dbReference type="SMR" id="P85075"/>
<dbReference type="GO" id="GO:0005576">
    <property type="term" value="C:extracellular region"/>
    <property type="evidence" value="ECO:0007669"/>
    <property type="project" value="UniProtKB-SubCell"/>
</dbReference>
<dbReference type="GO" id="GO:0004519">
    <property type="term" value="F:endonuclease activity"/>
    <property type="evidence" value="ECO:0007669"/>
    <property type="project" value="UniProtKB-KW"/>
</dbReference>
<dbReference type="GO" id="GO:0003676">
    <property type="term" value="F:nucleic acid binding"/>
    <property type="evidence" value="ECO:0007669"/>
    <property type="project" value="InterPro"/>
</dbReference>
<dbReference type="GO" id="GO:0004540">
    <property type="term" value="F:RNA nuclease activity"/>
    <property type="evidence" value="ECO:0007669"/>
    <property type="project" value="TreeGrafter"/>
</dbReference>
<dbReference type="GO" id="GO:0050830">
    <property type="term" value="P:defense response to Gram-positive bacterium"/>
    <property type="evidence" value="ECO:0007669"/>
    <property type="project" value="TreeGrafter"/>
</dbReference>
<dbReference type="CDD" id="cd06265">
    <property type="entry name" value="RNase_A_canonical"/>
    <property type="match status" value="1"/>
</dbReference>
<dbReference type="Gene3D" id="3.10.130.10">
    <property type="entry name" value="Ribonuclease A-like domain"/>
    <property type="match status" value="1"/>
</dbReference>
<dbReference type="InterPro" id="IPR001427">
    <property type="entry name" value="RNaseA"/>
</dbReference>
<dbReference type="InterPro" id="IPR036816">
    <property type="entry name" value="RNaseA-like_dom_sf"/>
</dbReference>
<dbReference type="InterPro" id="IPR023411">
    <property type="entry name" value="RNaseA_AS"/>
</dbReference>
<dbReference type="InterPro" id="IPR023412">
    <property type="entry name" value="RNaseA_domain"/>
</dbReference>
<dbReference type="PANTHER" id="PTHR11437">
    <property type="entry name" value="RIBONUCLEASE"/>
    <property type="match status" value="1"/>
</dbReference>
<dbReference type="PANTHER" id="PTHR11437:SF66">
    <property type="entry name" value="RNASE 3"/>
    <property type="match status" value="1"/>
</dbReference>
<dbReference type="Pfam" id="PF00074">
    <property type="entry name" value="RnaseA"/>
    <property type="match status" value="1"/>
</dbReference>
<dbReference type="SMART" id="SM00092">
    <property type="entry name" value="RNAse_Pc"/>
    <property type="match status" value="1"/>
</dbReference>
<dbReference type="SUPFAM" id="SSF54076">
    <property type="entry name" value="RNase A-like"/>
    <property type="match status" value="1"/>
</dbReference>
<dbReference type="PROSITE" id="PS00127">
    <property type="entry name" value="RNASE_PANCREATIC"/>
    <property type="match status" value="1"/>
</dbReference>
<evidence type="ECO:0000250" key="1">
    <source>
        <dbReference type="UniProtKB" id="P11916"/>
    </source>
</evidence>
<evidence type="ECO:0000255" key="2"/>
<evidence type="ECO:0000269" key="3">
    <source>
    </source>
</evidence>
<evidence type="ECO:0000305" key="4"/>
<name>AMPS4_LITPI</name>
<reference key="1">
    <citation type="journal article" date="2007" name="J. Mol. Biol.">
        <title>Enzymatic and structural characterisation of amphinase, a novel cytotoxic ribonuclease from Rana pipiens oocytes.</title>
        <authorList>
            <person name="Singh U.P."/>
            <person name="Ardelt W."/>
            <person name="Saxena S.K."/>
            <person name="Holloway D.E."/>
            <person name="Vidunas E."/>
            <person name="Lee H.-S."/>
            <person name="Saxena A."/>
            <person name="Shogen K."/>
            <person name="Acharya K.R."/>
        </authorList>
    </citation>
    <scope>PROTEIN SEQUENCE</scope>
    <scope>FUNCTION</scope>
    <scope>SUBUNIT</scope>
    <scope>MASS SPECTROMETRY</scope>
    <source>
        <tissue>Oocyte</tissue>
    </source>
</reference>
<organism>
    <name type="scientific">Lithobates pipiens</name>
    <name type="common">Northern leopard frog</name>
    <name type="synonym">Rana pipiens</name>
    <dbReference type="NCBI Taxonomy" id="8404"/>
    <lineage>
        <taxon>Eukaryota</taxon>
        <taxon>Metazoa</taxon>
        <taxon>Chordata</taxon>
        <taxon>Craniata</taxon>
        <taxon>Vertebrata</taxon>
        <taxon>Euteleostomi</taxon>
        <taxon>Amphibia</taxon>
        <taxon>Batrachia</taxon>
        <taxon>Anura</taxon>
        <taxon>Neobatrachia</taxon>
        <taxon>Ranoidea</taxon>
        <taxon>Ranidae</taxon>
        <taxon>Lithobates</taxon>
    </lineage>
</organism>
<sequence length="114" mass="12976">KPKEDKEWVKFKAKHITSQSVADFNCNKTMNDPDFTPDGQCKPVNTFIHSNTGPVKDICRRASGRVNKSSTQQFPLTTCNKPIRCKYSQSNTTNFICITCRDNYPVHFVKIGKC</sequence>
<protein>
    <recommendedName>
        <fullName>Amphinase-4</fullName>
        <ecNumber>3.1.27.-</ecNumber>
    </recommendedName>
</protein>